<accession>B7LGP7</accession>
<feature type="chain" id="PRO_1000148741" description="Acetyl-coenzyme A carboxylase carboxyl transferase subunit alpha">
    <location>
        <begin position="1"/>
        <end position="319"/>
    </location>
</feature>
<feature type="domain" description="CoA carboxyltransferase C-terminal" evidence="2">
    <location>
        <begin position="35"/>
        <end position="296"/>
    </location>
</feature>
<evidence type="ECO:0000255" key="1">
    <source>
        <dbReference type="HAMAP-Rule" id="MF_00823"/>
    </source>
</evidence>
<evidence type="ECO:0000255" key="2">
    <source>
        <dbReference type="PROSITE-ProRule" id="PRU01137"/>
    </source>
</evidence>
<proteinExistence type="inferred from homology"/>
<name>ACCA_ECO55</name>
<sequence>MSLNFLDFEQPIAELEAKIDSLTAVSRQDEKLDINIDEEVHRLREKSVELTRKIFADLGAWQIAQLARHPQRPYTLDYVRLAFDEFDELAGDRAYADDKAIVGGIARLDGRPVMIIGHQKGRETKEKIRRNFGMPAPEGYRKALRLMQMAERFKMPIITFIDTPGAYPGVGAEERGQSEAIARNLREMSRLGVPVVCTVIGEGGSGGALAIGVGDKVNMLQYSTYSVISPEGCASILWKSADKAPLAAEAMGIIAPRLKELKLIDSIIPEPLGGAHRNPEAMAASLKAQLLADLADLDVLSTEDLKNRRYQRLMSYGYA</sequence>
<protein>
    <recommendedName>
        <fullName evidence="1">Acetyl-coenzyme A carboxylase carboxyl transferase subunit alpha</fullName>
        <shortName evidence="1">ACCase subunit alpha</shortName>
        <shortName evidence="1">Acetyl-CoA carboxylase carboxyltransferase subunit alpha</shortName>
        <ecNumber evidence="1">2.1.3.15</ecNumber>
    </recommendedName>
</protein>
<comment type="function">
    <text evidence="1">Component of the acetyl coenzyme A carboxylase (ACC) complex. First, biotin carboxylase catalyzes the carboxylation of biotin on its carrier protein (BCCP) and then the CO(2) group is transferred by the carboxyltransferase to acetyl-CoA to form malonyl-CoA.</text>
</comment>
<comment type="catalytic activity">
    <reaction evidence="1">
        <text>N(6)-carboxybiotinyl-L-lysyl-[protein] + acetyl-CoA = N(6)-biotinyl-L-lysyl-[protein] + malonyl-CoA</text>
        <dbReference type="Rhea" id="RHEA:54728"/>
        <dbReference type="Rhea" id="RHEA-COMP:10505"/>
        <dbReference type="Rhea" id="RHEA-COMP:10506"/>
        <dbReference type="ChEBI" id="CHEBI:57288"/>
        <dbReference type="ChEBI" id="CHEBI:57384"/>
        <dbReference type="ChEBI" id="CHEBI:83144"/>
        <dbReference type="ChEBI" id="CHEBI:83145"/>
        <dbReference type="EC" id="2.1.3.15"/>
    </reaction>
</comment>
<comment type="pathway">
    <text evidence="1">Lipid metabolism; malonyl-CoA biosynthesis; malonyl-CoA from acetyl-CoA: step 1/1.</text>
</comment>
<comment type="subunit">
    <text evidence="1">Acetyl-CoA carboxylase is a heterohexamer composed of biotin carboxyl carrier protein (AccB), biotin carboxylase (AccC) and two subunits each of ACCase subunit alpha (AccA) and ACCase subunit beta (AccD).</text>
</comment>
<comment type="subcellular location">
    <subcellularLocation>
        <location evidence="1">Cytoplasm</location>
    </subcellularLocation>
</comment>
<comment type="similarity">
    <text evidence="1">Belongs to the AccA family.</text>
</comment>
<keyword id="KW-0067">ATP-binding</keyword>
<keyword id="KW-0963">Cytoplasm</keyword>
<keyword id="KW-0275">Fatty acid biosynthesis</keyword>
<keyword id="KW-0276">Fatty acid metabolism</keyword>
<keyword id="KW-0444">Lipid biosynthesis</keyword>
<keyword id="KW-0443">Lipid metabolism</keyword>
<keyword id="KW-0547">Nucleotide-binding</keyword>
<keyword id="KW-1185">Reference proteome</keyword>
<keyword id="KW-0808">Transferase</keyword>
<gene>
    <name evidence="1" type="primary">accA</name>
    <name type="ordered locus">EC55989_0179</name>
</gene>
<dbReference type="EC" id="2.1.3.15" evidence="1"/>
<dbReference type="EMBL" id="CU928145">
    <property type="protein sequence ID" value="CAU96065.1"/>
    <property type="molecule type" value="Genomic_DNA"/>
</dbReference>
<dbReference type="RefSeq" id="WP_000055741.1">
    <property type="nucleotide sequence ID" value="NZ_CP028304.1"/>
</dbReference>
<dbReference type="SMR" id="B7LGP7"/>
<dbReference type="GeneID" id="86945115"/>
<dbReference type="KEGG" id="eck:EC55989_0179"/>
<dbReference type="HOGENOM" id="CLU_015486_0_2_6"/>
<dbReference type="UniPathway" id="UPA00655">
    <property type="reaction ID" value="UER00711"/>
</dbReference>
<dbReference type="Proteomes" id="UP000000746">
    <property type="component" value="Chromosome"/>
</dbReference>
<dbReference type="GO" id="GO:0009317">
    <property type="term" value="C:acetyl-CoA carboxylase complex"/>
    <property type="evidence" value="ECO:0007669"/>
    <property type="project" value="InterPro"/>
</dbReference>
<dbReference type="GO" id="GO:0003989">
    <property type="term" value="F:acetyl-CoA carboxylase activity"/>
    <property type="evidence" value="ECO:0007669"/>
    <property type="project" value="InterPro"/>
</dbReference>
<dbReference type="GO" id="GO:0005524">
    <property type="term" value="F:ATP binding"/>
    <property type="evidence" value="ECO:0007669"/>
    <property type="project" value="UniProtKB-KW"/>
</dbReference>
<dbReference type="GO" id="GO:0016743">
    <property type="term" value="F:carboxyl- or carbamoyltransferase activity"/>
    <property type="evidence" value="ECO:0007669"/>
    <property type="project" value="UniProtKB-UniRule"/>
</dbReference>
<dbReference type="GO" id="GO:0006633">
    <property type="term" value="P:fatty acid biosynthetic process"/>
    <property type="evidence" value="ECO:0007669"/>
    <property type="project" value="UniProtKB-KW"/>
</dbReference>
<dbReference type="GO" id="GO:2001295">
    <property type="term" value="P:malonyl-CoA biosynthetic process"/>
    <property type="evidence" value="ECO:0007669"/>
    <property type="project" value="UniProtKB-UniRule"/>
</dbReference>
<dbReference type="FunFam" id="3.90.226.10:FF:000008">
    <property type="entry name" value="Acetyl-coenzyme A carboxylase carboxyl transferase subunit alpha"/>
    <property type="match status" value="1"/>
</dbReference>
<dbReference type="Gene3D" id="3.90.226.10">
    <property type="entry name" value="2-enoyl-CoA Hydratase, Chain A, domain 1"/>
    <property type="match status" value="1"/>
</dbReference>
<dbReference type="HAMAP" id="MF_00823">
    <property type="entry name" value="AcetylCoA_CT_alpha"/>
    <property type="match status" value="1"/>
</dbReference>
<dbReference type="InterPro" id="IPR001095">
    <property type="entry name" value="Acetyl_CoA_COase_a_su"/>
</dbReference>
<dbReference type="InterPro" id="IPR029045">
    <property type="entry name" value="ClpP/crotonase-like_dom_sf"/>
</dbReference>
<dbReference type="InterPro" id="IPR011763">
    <property type="entry name" value="COA_CT_C"/>
</dbReference>
<dbReference type="NCBIfam" id="TIGR00513">
    <property type="entry name" value="accA"/>
    <property type="match status" value="1"/>
</dbReference>
<dbReference type="NCBIfam" id="NF041504">
    <property type="entry name" value="AccA_sub"/>
    <property type="match status" value="1"/>
</dbReference>
<dbReference type="NCBIfam" id="NF004344">
    <property type="entry name" value="PRK05724.1"/>
    <property type="match status" value="1"/>
</dbReference>
<dbReference type="PANTHER" id="PTHR42853">
    <property type="entry name" value="ACETYL-COENZYME A CARBOXYLASE CARBOXYL TRANSFERASE SUBUNIT ALPHA"/>
    <property type="match status" value="1"/>
</dbReference>
<dbReference type="PANTHER" id="PTHR42853:SF3">
    <property type="entry name" value="ACETYL-COENZYME A CARBOXYLASE CARBOXYL TRANSFERASE SUBUNIT ALPHA, CHLOROPLASTIC"/>
    <property type="match status" value="1"/>
</dbReference>
<dbReference type="Pfam" id="PF03255">
    <property type="entry name" value="ACCA"/>
    <property type="match status" value="1"/>
</dbReference>
<dbReference type="PRINTS" id="PR01069">
    <property type="entry name" value="ACCCTRFRASEA"/>
</dbReference>
<dbReference type="SUPFAM" id="SSF52096">
    <property type="entry name" value="ClpP/crotonase"/>
    <property type="match status" value="1"/>
</dbReference>
<dbReference type="PROSITE" id="PS50989">
    <property type="entry name" value="COA_CT_CTER"/>
    <property type="match status" value="1"/>
</dbReference>
<reference key="1">
    <citation type="journal article" date="2009" name="PLoS Genet.">
        <title>Organised genome dynamics in the Escherichia coli species results in highly diverse adaptive paths.</title>
        <authorList>
            <person name="Touchon M."/>
            <person name="Hoede C."/>
            <person name="Tenaillon O."/>
            <person name="Barbe V."/>
            <person name="Baeriswyl S."/>
            <person name="Bidet P."/>
            <person name="Bingen E."/>
            <person name="Bonacorsi S."/>
            <person name="Bouchier C."/>
            <person name="Bouvet O."/>
            <person name="Calteau A."/>
            <person name="Chiapello H."/>
            <person name="Clermont O."/>
            <person name="Cruveiller S."/>
            <person name="Danchin A."/>
            <person name="Diard M."/>
            <person name="Dossat C."/>
            <person name="Karoui M.E."/>
            <person name="Frapy E."/>
            <person name="Garry L."/>
            <person name="Ghigo J.M."/>
            <person name="Gilles A.M."/>
            <person name="Johnson J."/>
            <person name="Le Bouguenec C."/>
            <person name="Lescat M."/>
            <person name="Mangenot S."/>
            <person name="Martinez-Jehanne V."/>
            <person name="Matic I."/>
            <person name="Nassif X."/>
            <person name="Oztas S."/>
            <person name="Petit M.A."/>
            <person name="Pichon C."/>
            <person name="Rouy Z."/>
            <person name="Ruf C.S."/>
            <person name="Schneider D."/>
            <person name="Tourret J."/>
            <person name="Vacherie B."/>
            <person name="Vallenet D."/>
            <person name="Medigue C."/>
            <person name="Rocha E.P.C."/>
            <person name="Denamur E."/>
        </authorList>
    </citation>
    <scope>NUCLEOTIDE SEQUENCE [LARGE SCALE GENOMIC DNA]</scope>
    <source>
        <strain>55989 / EAEC</strain>
    </source>
</reference>
<organism>
    <name type="scientific">Escherichia coli (strain 55989 / EAEC)</name>
    <dbReference type="NCBI Taxonomy" id="585055"/>
    <lineage>
        <taxon>Bacteria</taxon>
        <taxon>Pseudomonadati</taxon>
        <taxon>Pseudomonadota</taxon>
        <taxon>Gammaproteobacteria</taxon>
        <taxon>Enterobacterales</taxon>
        <taxon>Enterobacteriaceae</taxon>
        <taxon>Escherichia</taxon>
    </lineage>
</organism>